<proteinExistence type="inferred from homology"/>
<reference key="1">
    <citation type="journal article" date="2009" name="PLoS Genet.">
        <title>Organised genome dynamics in the Escherichia coli species results in highly diverse adaptive paths.</title>
        <authorList>
            <person name="Touchon M."/>
            <person name="Hoede C."/>
            <person name="Tenaillon O."/>
            <person name="Barbe V."/>
            <person name="Baeriswyl S."/>
            <person name="Bidet P."/>
            <person name="Bingen E."/>
            <person name="Bonacorsi S."/>
            <person name="Bouchier C."/>
            <person name="Bouvet O."/>
            <person name="Calteau A."/>
            <person name="Chiapello H."/>
            <person name="Clermont O."/>
            <person name="Cruveiller S."/>
            <person name="Danchin A."/>
            <person name="Diard M."/>
            <person name="Dossat C."/>
            <person name="Karoui M.E."/>
            <person name="Frapy E."/>
            <person name="Garry L."/>
            <person name="Ghigo J.M."/>
            <person name="Gilles A.M."/>
            <person name="Johnson J."/>
            <person name="Le Bouguenec C."/>
            <person name="Lescat M."/>
            <person name="Mangenot S."/>
            <person name="Martinez-Jehanne V."/>
            <person name="Matic I."/>
            <person name="Nassif X."/>
            <person name="Oztas S."/>
            <person name="Petit M.A."/>
            <person name="Pichon C."/>
            <person name="Rouy Z."/>
            <person name="Ruf C.S."/>
            <person name="Schneider D."/>
            <person name="Tourret J."/>
            <person name="Vacherie B."/>
            <person name="Vallenet D."/>
            <person name="Medigue C."/>
            <person name="Rocha E.P.C."/>
            <person name="Denamur E."/>
        </authorList>
    </citation>
    <scope>NUCLEOTIDE SEQUENCE [LARGE SCALE GENOMIC DNA]</scope>
    <source>
        <strain>ED1a</strain>
    </source>
</reference>
<name>PYRF_ECO81</name>
<comment type="function">
    <text evidence="1">Catalyzes the decarboxylation of orotidine 5'-monophosphate (OMP) to uridine 5'-monophosphate (UMP).</text>
</comment>
<comment type="catalytic activity">
    <reaction evidence="1">
        <text>orotidine 5'-phosphate + H(+) = UMP + CO2</text>
        <dbReference type="Rhea" id="RHEA:11596"/>
        <dbReference type="ChEBI" id="CHEBI:15378"/>
        <dbReference type="ChEBI" id="CHEBI:16526"/>
        <dbReference type="ChEBI" id="CHEBI:57538"/>
        <dbReference type="ChEBI" id="CHEBI:57865"/>
        <dbReference type="EC" id="4.1.1.23"/>
    </reaction>
</comment>
<comment type="pathway">
    <text evidence="1">Pyrimidine metabolism; UMP biosynthesis via de novo pathway; UMP from orotate: step 2/2.</text>
</comment>
<comment type="subunit">
    <text evidence="1">Homodimer.</text>
</comment>
<comment type="similarity">
    <text evidence="1">Belongs to the OMP decarboxylase family. Type 1 subfamily.</text>
</comment>
<gene>
    <name evidence="1" type="primary">pyrF</name>
    <name type="ordered locus">ECED1_1491</name>
</gene>
<evidence type="ECO:0000255" key="1">
    <source>
        <dbReference type="HAMAP-Rule" id="MF_01200"/>
    </source>
</evidence>
<protein>
    <recommendedName>
        <fullName evidence="1">Orotidine 5'-phosphate decarboxylase</fullName>
        <ecNumber evidence="1">4.1.1.23</ecNumber>
    </recommendedName>
    <alternativeName>
        <fullName evidence="1">OMP decarboxylase</fullName>
        <shortName evidence="1">OMPDCase</shortName>
        <shortName evidence="1">OMPdecase</shortName>
    </alternativeName>
</protein>
<organism>
    <name type="scientific">Escherichia coli O81 (strain ED1a)</name>
    <dbReference type="NCBI Taxonomy" id="585397"/>
    <lineage>
        <taxon>Bacteria</taxon>
        <taxon>Pseudomonadati</taxon>
        <taxon>Pseudomonadota</taxon>
        <taxon>Gammaproteobacteria</taxon>
        <taxon>Enterobacterales</taxon>
        <taxon>Enterobacteriaceae</taxon>
        <taxon>Escherichia</taxon>
    </lineage>
</organism>
<accession>B7MUC3</accession>
<feature type="chain" id="PRO_1000164570" description="Orotidine 5'-phosphate decarboxylase">
    <location>
        <begin position="1"/>
        <end position="245"/>
    </location>
</feature>
<feature type="active site" description="Proton donor" evidence="1">
    <location>
        <position position="73"/>
    </location>
</feature>
<feature type="binding site" evidence="1">
    <location>
        <position position="22"/>
    </location>
    <ligand>
        <name>substrate</name>
    </ligand>
</feature>
<feature type="binding site" evidence="1">
    <location>
        <position position="44"/>
    </location>
    <ligand>
        <name>substrate</name>
    </ligand>
</feature>
<feature type="binding site" evidence="1">
    <location>
        <begin position="71"/>
        <end position="80"/>
    </location>
    <ligand>
        <name>substrate</name>
    </ligand>
</feature>
<feature type="binding site" evidence="1">
    <location>
        <position position="131"/>
    </location>
    <ligand>
        <name>substrate</name>
    </ligand>
</feature>
<feature type="binding site" evidence="1">
    <location>
        <position position="192"/>
    </location>
    <ligand>
        <name>substrate</name>
    </ligand>
</feature>
<feature type="binding site" evidence="1">
    <location>
        <position position="201"/>
    </location>
    <ligand>
        <name>substrate</name>
    </ligand>
</feature>
<feature type="binding site" evidence="1">
    <location>
        <position position="221"/>
    </location>
    <ligand>
        <name>substrate</name>
    </ligand>
</feature>
<feature type="binding site" evidence="1">
    <location>
        <position position="222"/>
    </location>
    <ligand>
        <name>substrate</name>
    </ligand>
</feature>
<sequence>MTLTASSSSRAVTNSPVVVALDYHNRDAAMAFVDKIDPRDCRLKVGKEMFTLFGPQFVSELQQRGFDIFLDLKFHDIPNTAAHAVAAAADLGVWMVNVHASGGARMMAAAREALVPFGKDAPLLIAVTVLTSMEASDLADLGVTLSPADYAERLAALTQKCGLDGVVCSAQEAVRFKQVFGQEFKLVTPGIRPQGSDAGDQRRIMTPEQALSAGVDYMVIGRPVTQSVDPAQTLKAINASLQRSA</sequence>
<keyword id="KW-0210">Decarboxylase</keyword>
<keyword id="KW-0456">Lyase</keyword>
<keyword id="KW-0665">Pyrimidine biosynthesis</keyword>
<dbReference type="EC" id="4.1.1.23" evidence="1"/>
<dbReference type="EMBL" id="CU928162">
    <property type="protein sequence ID" value="CAR07689.2"/>
    <property type="molecule type" value="Genomic_DNA"/>
</dbReference>
<dbReference type="RefSeq" id="WP_001357400.1">
    <property type="nucleotide sequence ID" value="NC_011745.1"/>
</dbReference>
<dbReference type="SMR" id="B7MUC3"/>
<dbReference type="KEGG" id="ecq:ECED1_1491"/>
<dbReference type="HOGENOM" id="CLU_067069_0_0_6"/>
<dbReference type="UniPathway" id="UPA00070">
    <property type="reaction ID" value="UER00120"/>
</dbReference>
<dbReference type="Proteomes" id="UP000000748">
    <property type="component" value="Chromosome"/>
</dbReference>
<dbReference type="GO" id="GO:0005829">
    <property type="term" value="C:cytosol"/>
    <property type="evidence" value="ECO:0007669"/>
    <property type="project" value="TreeGrafter"/>
</dbReference>
<dbReference type="GO" id="GO:0004590">
    <property type="term" value="F:orotidine-5'-phosphate decarboxylase activity"/>
    <property type="evidence" value="ECO:0007669"/>
    <property type="project" value="UniProtKB-UniRule"/>
</dbReference>
<dbReference type="GO" id="GO:0006207">
    <property type="term" value="P:'de novo' pyrimidine nucleobase biosynthetic process"/>
    <property type="evidence" value="ECO:0007669"/>
    <property type="project" value="InterPro"/>
</dbReference>
<dbReference type="GO" id="GO:0044205">
    <property type="term" value="P:'de novo' UMP biosynthetic process"/>
    <property type="evidence" value="ECO:0007669"/>
    <property type="project" value="UniProtKB-UniRule"/>
</dbReference>
<dbReference type="CDD" id="cd04725">
    <property type="entry name" value="OMP_decarboxylase_like"/>
    <property type="match status" value="1"/>
</dbReference>
<dbReference type="FunFam" id="3.20.20.70:FF:000015">
    <property type="entry name" value="Orotidine 5'-phosphate decarboxylase"/>
    <property type="match status" value="1"/>
</dbReference>
<dbReference type="Gene3D" id="3.20.20.70">
    <property type="entry name" value="Aldolase class I"/>
    <property type="match status" value="1"/>
</dbReference>
<dbReference type="HAMAP" id="MF_01200_B">
    <property type="entry name" value="OMPdecase_type1_B"/>
    <property type="match status" value="1"/>
</dbReference>
<dbReference type="InterPro" id="IPR013785">
    <property type="entry name" value="Aldolase_TIM"/>
</dbReference>
<dbReference type="InterPro" id="IPR014732">
    <property type="entry name" value="OMPdecase"/>
</dbReference>
<dbReference type="InterPro" id="IPR018089">
    <property type="entry name" value="OMPdecase_AS"/>
</dbReference>
<dbReference type="InterPro" id="IPR047596">
    <property type="entry name" value="OMPdecase_bac"/>
</dbReference>
<dbReference type="InterPro" id="IPR001754">
    <property type="entry name" value="OMPdeCOase_dom"/>
</dbReference>
<dbReference type="InterPro" id="IPR011060">
    <property type="entry name" value="RibuloseP-bd_barrel"/>
</dbReference>
<dbReference type="NCBIfam" id="NF001273">
    <property type="entry name" value="PRK00230.1"/>
    <property type="match status" value="1"/>
</dbReference>
<dbReference type="NCBIfam" id="TIGR01740">
    <property type="entry name" value="pyrF"/>
    <property type="match status" value="1"/>
</dbReference>
<dbReference type="PANTHER" id="PTHR32119">
    <property type="entry name" value="OROTIDINE 5'-PHOSPHATE DECARBOXYLASE"/>
    <property type="match status" value="1"/>
</dbReference>
<dbReference type="PANTHER" id="PTHR32119:SF2">
    <property type="entry name" value="OROTIDINE 5'-PHOSPHATE DECARBOXYLASE"/>
    <property type="match status" value="1"/>
</dbReference>
<dbReference type="Pfam" id="PF00215">
    <property type="entry name" value="OMPdecase"/>
    <property type="match status" value="1"/>
</dbReference>
<dbReference type="SMART" id="SM00934">
    <property type="entry name" value="OMPdecase"/>
    <property type="match status" value="1"/>
</dbReference>
<dbReference type="SUPFAM" id="SSF51366">
    <property type="entry name" value="Ribulose-phoshate binding barrel"/>
    <property type="match status" value="1"/>
</dbReference>
<dbReference type="PROSITE" id="PS00156">
    <property type="entry name" value="OMPDECASE"/>
    <property type="match status" value="1"/>
</dbReference>